<reference key="1">
    <citation type="journal article" date="2003" name="Proc. Natl. Acad. Sci. U.S.A.">
        <title>The complete genome sequence of the Arabidopsis and tomato pathogen Pseudomonas syringae pv. tomato DC3000.</title>
        <authorList>
            <person name="Buell C.R."/>
            <person name="Joardar V."/>
            <person name="Lindeberg M."/>
            <person name="Selengut J."/>
            <person name="Paulsen I.T."/>
            <person name="Gwinn M.L."/>
            <person name="Dodson R.J."/>
            <person name="DeBoy R.T."/>
            <person name="Durkin A.S."/>
            <person name="Kolonay J.F."/>
            <person name="Madupu R."/>
            <person name="Daugherty S.C."/>
            <person name="Brinkac L.M."/>
            <person name="Beanan M.J."/>
            <person name="Haft D.H."/>
            <person name="Nelson W.C."/>
            <person name="Davidsen T.M."/>
            <person name="Zafar N."/>
            <person name="Zhou L."/>
            <person name="Liu J."/>
            <person name="Yuan Q."/>
            <person name="Khouri H.M."/>
            <person name="Fedorova N.B."/>
            <person name="Tran B."/>
            <person name="Russell D."/>
            <person name="Berry K.J."/>
            <person name="Utterback T.R."/>
            <person name="Van Aken S.E."/>
            <person name="Feldblyum T.V."/>
            <person name="D'Ascenzo M."/>
            <person name="Deng W.-L."/>
            <person name="Ramos A.R."/>
            <person name="Alfano J.R."/>
            <person name="Cartinhour S."/>
            <person name="Chatterjee A.K."/>
            <person name="Delaney T.P."/>
            <person name="Lazarowitz S.G."/>
            <person name="Martin G.B."/>
            <person name="Schneider D.J."/>
            <person name="Tang X."/>
            <person name="Bender C.L."/>
            <person name="White O."/>
            <person name="Fraser C.M."/>
            <person name="Collmer A."/>
        </authorList>
    </citation>
    <scope>NUCLEOTIDE SEQUENCE [LARGE SCALE GENOMIC DNA]</scope>
    <source>
        <strain>ATCC BAA-871 / DC3000</strain>
    </source>
</reference>
<keyword id="KW-0963">Cytoplasm</keyword>
<keyword id="KW-0479">Metal-binding</keyword>
<keyword id="KW-0520">NAD</keyword>
<keyword id="KW-1185">Reference proteome</keyword>
<keyword id="KW-0808">Transferase</keyword>
<keyword id="KW-0862">Zinc</keyword>
<proteinExistence type="inferred from homology"/>
<feature type="chain" id="PRO_0000110342" description="NAD-dependent protein deacylase 4">
    <location>
        <begin position="1"/>
        <end position="256"/>
    </location>
</feature>
<feature type="domain" description="Deacetylase sirtuin-type" evidence="2">
    <location>
        <begin position="1"/>
        <end position="250"/>
    </location>
</feature>
<feature type="active site" description="Proton acceptor" evidence="2">
    <location>
        <position position="116"/>
    </location>
</feature>
<feature type="binding site" evidence="1">
    <location>
        <begin position="19"/>
        <end position="39"/>
    </location>
    <ligand>
        <name>NAD(+)</name>
        <dbReference type="ChEBI" id="CHEBI:57540"/>
    </ligand>
</feature>
<feature type="binding site" evidence="1">
    <location>
        <position position="64"/>
    </location>
    <ligand>
        <name>substrate</name>
    </ligand>
</feature>
<feature type="binding site" evidence="1">
    <location>
        <position position="67"/>
    </location>
    <ligand>
        <name>substrate</name>
    </ligand>
</feature>
<feature type="binding site" evidence="1">
    <location>
        <begin position="98"/>
        <end position="101"/>
    </location>
    <ligand>
        <name>NAD(+)</name>
        <dbReference type="ChEBI" id="CHEBI:57540"/>
    </ligand>
</feature>
<feature type="binding site" evidence="1">
    <location>
        <position position="124"/>
    </location>
    <ligand>
        <name>Zn(2+)</name>
        <dbReference type="ChEBI" id="CHEBI:29105"/>
    </ligand>
</feature>
<feature type="binding site" evidence="1">
    <location>
        <position position="127"/>
    </location>
    <ligand>
        <name>Zn(2+)</name>
        <dbReference type="ChEBI" id="CHEBI:29105"/>
    </ligand>
</feature>
<feature type="binding site" evidence="1">
    <location>
        <position position="152"/>
    </location>
    <ligand>
        <name>Zn(2+)</name>
        <dbReference type="ChEBI" id="CHEBI:29105"/>
    </ligand>
</feature>
<feature type="binding site" evidence="1">
    <location>
        <position position="155"/>
    </location>
    <ligand>
        <name>Zn(2+)</name>
        <dbReference type="ChEBI" id="CHEBI:29105"/>
    </ligand>
</feature>
<feature type="binding site" evidence="1">
    <location>
        <begin position="192"/>
        <end position="194"/>
    </location>
    <ligand>
        <name>NAD(+)</name>
        <dbReference type="ChEBI" id="CHEBI:57540"/>
    </ligand>
</feature>
<feature type="binding site" evidence="1">
    <location>
        <begin position="218"/>
        <end position="220"/>
    </location>
    <ligand>
        <name>NAD(+)</name>
        <dbReference type="ChEBI" id="CHEBI:57540"/>
    </ligand>
</feature>
<feature type="binding site" evidence="1">
    <location>
        <position position="236"/>
    </location>
    <ligand>
        <name>NAD(+)</name>
        <dbReference type="ChEBI" id="CHEBI:57540"/>
    </ligand>
</feature>
<organism>
    <name type="scientific">Pseudomonas syringae pv. tomato (strain ATCC BAA-871 / DC3000)</name>
    <dbReference type="NCBI Taxonomy" id="223283"/>
    <lineage>
        <taxon>Bacteria</taxon>
        <taxon>Pseudomonadati</taxon>
        <taxon>Pseudomonadota</taxon>
        <taxon>Gammaproteobacteria</taxon>
        <taxon>Pseudomonadales</taxon>
        <taxon>Pseudomonadaceae</taxon>
        <taxon>Pseudomonas</taxon>
    </lineage>
</organism>
<evidence type="ECO:0000255" key="1">
    <source>
        <dbReference type="HAMAP-Rule" id="MF_01121"/>
    </source>
</evidence>
<evidence type="ECO:0000255" key="2">
    <source>
        <dbReference type="PROSITE-ProRule" id="PRU00236"/>
    </source>
</evidence>
<comment type="function">
    <text evidence="1">NAD-dependent lysine deacetylase and desuccinylase that specifically removes acetyl and succinyl groups on target proteins. Modulates the activities of several proteins which are inactive in their acylated form.</text>
</comment>
<comment type="catalytic activity">
    <reaction evidence="1">
        <text>N(6)-acetyl-L-lysyl-[protein] + NAD(+) + H2O = 2''-O-acetyl-ADP-D-ribose + nicotinamide + L-lysyl-[protein]</text>
        <dbReference type="Rhea" id="RHEA:43636"/>
        <dbReference type="Rhea" id="RHEA-COMP:9752"/>
        <dbReference type="Rhea" id="RHEA-COMP:10731"/>
        <dbReference type="ChEBI" id="CHEBI:15377"/>
        <dbReference type="ChEBI" id="CHEBI:17154"/>
        <dbReference type="ChEBI" id="CHEBI:29969"/>
        <dbReference type="ChEBI" id="CHEBI:57540"/>
        <dbReference type="ChEBI" id="CHEBI:61930"/>
        <dbReference type="ChEBI" id="CHEBI:83767"/>
        <dbReference type="EC" id="2.3.1.286"/>
    </reaction>
</comment>
<comment type="catalytic activity">
    <reaction evidence="1">
        <text>N(6)-succinyl-L-lysyl-[protein] + NAD(+) + H2O = 2''-O-succinyl-ADP-D-ribose + nicotinamide + L-lysyl-[protein]</text>
        <dbReference type="Rhea" id="RHEA:47668"/>
        <dbReference type="Rhea" id="RHEA-COMP:9752"/>
        <dbReference type="Rhea" id="RHEA-COMP:11877"/>
        <dbReference type="ChEBI" id="CHEBI:15377"/>
        <dbReference type="ChEBI" id="CHEBI:17154"/>
        <dbReference type="ChEBI" id="CHEBI:29969"/>
        <dbReference type="ChEBI" id="CHEBI:57540"/>
        <dbReference type="ChEBI" id="CHEBI:87830"/>
        <dbReference type="ChEBI" id="CHEBI:87832"/>
    </reaction>
</comment>
<comment type="cofactor">
    <cofactor evidence="1">
        <name>Zn(2+)</name>
        <dbReference type="ChEBI" id="CHEBI:29105"/>
    </cofactor>
    <text evidence="1">Binds 1 zinc ion per subunit.</text>
</comment>
<comment type="subcellular location">
    <subcellularLocation>
        <location evidence="1">Cytoplasm</location>
    </subcellularLocation>
</comment>
<comment type="domain">
    <text evidence="1">2 residues (Tyr-64 and Arg-67) present in a large hydrophobic pocket are probably involved in substrate specificity. They are important for desuccinylation activity, but dispensable for deacetylation activity.</text>
</comment>
<comment type="similarity">
    <text evidence="1">Belongs to the sirtuin family. Class III subfamily.</text>
</comment>
<protein>
    <recommendedName>
        <fullName evidence="1">NAD-dependent protein deacylase 4</fullName>
        <ecNumber evidence="1 2">2.3.1.286</ecNumber>
    </recommendedName>
    <alternativeName>
        <fullName evidence="1">Regulatory protein SIR2 homolog 4</fullName>
    </alternativeName>
</protein>
<sequence length="256" mass="27820">MRLPAEALKDARKIVCFSGAGISAESGILTYLDQMPKLWAPYDPRALETANAFRESPALVWGWYLWRRRQVDRAQPNAAHLVWPQMVNLGYEVSVVTQNVDDLHERAGSTDVIHLHGSLTMPKCFACHRPAELTSDQMEIPDEGALVEPPRCKRCRGKLRPGVVWYGEDLPPGTWKNAVSLVKNCDALISVGTSGVVTPAADLPHIALASGATVIHVNTVDVGAQAANELMLVGRATDVLAKIHESLSTGKNNDNG</sequence>
<name>NPD4_PSESM</name>
<dbReference type="EC" id="2.3.1.286" evidence="1 2"/>
<dbReference type="EMBL" id="AE016853">
    <property type="protein sequence ID" value="AAO58121.1"/>
    <property type="molecule type" value="Genomic_DNA"/>
</dbReference>
<dbReference type="RefSeq" id="NP_794426.1">
    <property type="nucleotide sequence ID" value="NC_004578.1"/>
</dbReference>
<dbReference type="SMR" id="Q87W79"/>
<dbReference type="STRING" id="223283.PSPTO_4675"/>
<dbReference type="KEGG" id="pst:PSPTO_4675"/>
<dbReference type="PATRIC" id="fig|223283.9.peg.4793"/>
<dbReference type="eggNOG" id="COG0846">
    <property type="taxonomic scope" value="Bacteria"/>
</dbReference>
<dbReference type="HOGENOM" id="CLU_023643_3_1_6"/>
<dbReference type="OrthoDB" id="9800582at2"/>
<dbReference type="PhylomeDB" id="Q87W79"/>
<dbReference type="Proteomes" id="UP000002515">
    <property type="component" value="Chromosome"/>
</dbReference>
<dbReference type="GO" id="GO:0005737">
    <property type="term" value="C:cytoplasm"/>
    <property type="evidence" value="ECO:0007669"/>
    <property type="project" value="UniProtKB-SubCell"/>
</dbReference>
<dbReference type="GO" id="GO:0017136">
    <property type="term" value="F:histone deacetylase activity, NAD-dependent"/>
    <property type="evidence" value="ECO:0007669"/>
    <property type="project" value="TreeGrafter"/>
</dbReference>
<dbReference type="GO" id="GO:0070403">
    <property type="term" value="F:NAD+ binding"/>
    <property type="evidence" value="ECO:0007669"/>
    <property type="project" value="UniProtKB-UniRule"/>
</dbReference>
<dbReference type="GO" id="GO:0036054">
    <property type="term" value="F:protein-malonyllysine demalonylase activity"/>
    <property type="evidence" value="ECO:0007669"/>
    <property type="project" value="InterPro"/>
</dbReference>
<dbReference type="GO" id="GO:0036055">
    <property type="term" value="F:protein-succinyllysine desuccinylase activity"/>
    <property type="evidence" value="ECO:0007669"/>
    <property type="project" value="UniProtKB-UniRule"/>
</dbReference>
<dbReference type="GO" id="GO:0008270">
    <property type="term" value="F:zinc ion binding"/>
    <property type="evidence" value="ECO:0007669"/>
    <property type="project" value="UniProtKB-UniRule"/>
</dbReference>
<dbReference type="Gene3D" id="3.30.1600.10">
    <property type="entry name" value="SIR2/SIRT2 'Small Domain"/>
    <property type="match status" value="1"/>
</dbReference>
<dbReference type="Gene3D" id="3.40.50.1220">
    <property type="entry name" value="TPP-binding domain"/>
    <property type="match status" value="1"/>
</dbReference>
<dbReference type="HAMAP" id="MF_01121">
    <property type="entry name" value="Sirtuin_ClassIII"/>
    <property type="match status" value="1"/>
</dbReference>
<dbReference type="InterPro" id="IPR029035">
    <property type="entry name" value="DHS-like_NAD/FAD-binding_dom"/>
</dbReference>
<dbReference type="InterPro" id="IPR050134">
    <property type="entry name" value="NAD-dep_sirtuin_deacylases"/>
</dbReference>
<dbReference type="InterPro" id="IPR003000">
    <property type="entry name" value="Sirtuin"/>
</dbReference>
<dbReference type="InterPro" id="IPR026591">
    <property type="entry name" value="Sirtuin_cat_small_dom_sf"/>
</dbReference>
<dbReference type="InterPro" id="IPR027546">
    <property type="entry name" value="Sirtuin_class_III"/>
</dbReference>
<dbReference type="InterPro" id="IPR026590">
    <property type="entry name" value="Ssirtuin_cat_dom"/>
</dbReference>
<dbReference type="NCBIfam" id="NF001753">
    <property type="entry name" value="PRK00481.1-3"/>
    <property type="match status" value="1"/>
</dbReference>
<dbReference type="PANTHER" id="PTHR11085">
    <property type="entry name" value="NAD-DEPENDENT PROTEIN DEACYLASE SIRTUIN-5, MITOCHONDRIAL-RELATED"/>
    <property type="match status" value="1"/>
</dbReference>
<dbReference type="PANTHER" id="PTHR11085:SF10">
    <property type="entry name" value="NAD-DEPENDENT PROTEIN DEACYLASE SIRTUIN-5, MITOCHONDRIAL-RELATED"/>
    <property type="match status" value="1"/>
</dbReference>
<dbReference type="Pfam" id="PF02146">
    <property type="entry name" value="SIR2"/>
    <property type="match status" value="1"/>
</dbReference>
<dbReference type="SUPFAM" id="SSF52467">
    <property type="entry name" value="DHS-like NAD/FAD-binding domain"/>
    <property type="match status" value="1"/>
</dbReference>
<dbReference type="PROSITE" id="PS50305">
    <property type="entry name" value="SIRTUIN"/>
    <property type="match status" value="1"/>
</dbReference>
<gene>
    <name evidence="1" type="primary">cobB4</name>
    <name type="ordered locus">PSPTO_4675</name>
</gene>
<accession>Q87W79</accession>